<protein>
    <recommendedName>
        <fullName>Kunitz-type serine protease inhibitor 87</fullName>
        <shortName>SPI-87</shortName>
    </recommendedName>
</protein>
<accession>F8J2F5</accession>
<dbReference type="EMBL" id="FJ752473">
    <property type="protein sequence ID" value="ACR78495.1"/>
    <property type="molecule type" value="mRNA"/>
</dbReference>
<dbReference type="SMR" id="F8J2F5"/>
<dbReference type="MEROPS" id="I02.052"/>
<dbReference type="GO" id="GO:0005615">
    <property type="term" value="C:extracellular space"/>
    <property type="evidence" value="ECO:0007669"/>
    <property type="project" value="TreeGrafter"/>
</dbReference>
<dbReference type="GO" id="GO:0004867">
    <property type="term" value="F:serine-type endopeptidase inhibitor activity"/>
    <property type="evidence" value="ECO:0007669"/>
    <property type="project" value="UniProtKB-KW"/>
</dbReference>
<dbReference type="CDD" id="cd22594">
    <property type="entry name" value="Kunitz_textilinin-like"/>
    <property type="match status" value="1"/>
</dbReference>
<dbReference type="FunFam" id="4.10.410.10:FF:000021">
    <property type="entry name" value="Serine protease inhibitor, putative"/>
    <property type="match status" value="1"/>
</dbReference>
<dbReference type="Gene3D" id="4.10.410.10">
    <property type="entry name" value="Pancreatic trypsin inhibitor Kunitz domain"/>
    <property type="match status" value="1"/>
</dbReference>
<dbReference type="InterPro" id="IPR002223">
    <property type="entry name" value="Kunitz_BPTI"/>
</dbReference>
<dbReference type="InterPro" id="IPR036880">
    <property type="entry name" value="Kunitz_BPTI_sf"/>
</dbReference>
<dbReference type="InterPro" id="IPR020901">
    <property type="entry name" value="Prtase_inh_Kunz-CS"/>
</dbReference>
<dbReference type="InterPro" id="IPR050098">
    <property type="entry name" value="TFPI/VKTCI-like"/>
</dbReference>
<dbReference type="PANTHER" id="PTHR10083:SF374">
    <property type="entry name" value="BPTI_KUNITZ INHIBITOR DOMAIN-CONTAINING PROTEIN"/>
    <property type="match status" value="1"/>
</dbReference>
<dbReference type="PANTHER" id="PTHR10083">
    <property type="entry name" value="KUNITZ-TYPE PROTEASE INHIBITOR-RELATED"/>
    <property type="match status" value="1"/>
</dbReference>
<dbReference type="Pfam" id="PF00014">
    <property type="entry name" value="Kunitz_BPTI"/>
    <property type="match status" value="1"/>
</dbReference>
<dbReference type="PRINTS" id="PR00759">
    <property type="entry name" value="BASICPTASE"/>
</dbReference>
<dbReference type="SMART" id="SM00131">
    <property type="entry name" value="KU"/>
    <property type="match status" value="1"/>
</dbReference>
<dbReference type="SUPFAM" id="SSF57362">
    <property type="entry name" value="BPTI-like"/>
    <property type="match status" value="1"/>
</dbReference>
<dbReference type="PROSITE" id="PS00280">
    <property type="entry name" value="BPTI_KUNITZ_1"/>
    <property type="match status" value="1"/>
</dbReference>
<dbReference type="PROSITE" id="PS50279">
    <property type="entry name" value="BPTI_KUNITZ_2"/>
    <property type="match status" value="1"/>
</dbReference>
<feature type="signal peptide" evidence="2">
    <location>
        <begin position="1"/>
        <end position="24"/>
    </location>
</feature>
<feature type="chain" id="PRO_0000425517" description="Kunitz-type serine protease inhibitor 87">
    <location>
        <begin position="25"/>
        <end position="83"/>
    </location>
</feature>
<feature type="domain" description="BPTI/Kunitz inhibitor" evidence="3">
    <location>
        <begin position="31"/>
        <end position="81"/>
    </location>
</feature>
<feature type="site" description="Reactive bond for trypsin" evidence="1">
    <location>
        <begin position="41"/>
        <end position="42"/>
    </location>
</feature>
<feature type="disulfide bond" evidence="3">
    <location>
        <begin position="31"/>
        <end position="81"/>
    </location>
</feature>
<feature type="disulfide bond" evidence="3">
    <location>
        <begin position="40"/>
        <end position="64"/>
    </location>
</feature>
<feature type="disulfide bond" evidence="3">
    <location>
        <begin position="56"/>
        <end position="77"/>
    </location>
</feature>
<evidence type="ECO:0000250" key="1"/>
<evidence type="ECO:0000255" key="2"/>
<evidence type="ECO:0000255" key="3">
    <source>
        <dbReference type="PROSITE-ProRule" id="PRU00031"/>
    </source>
</evidence>
<evidence type="ECO:0000305" key="4"/>
<keyword id="KW-1015">Disulfide bond</keyword>
<keyword id="KW-0646">Protease inhibitor</keyword>
<keyword id="KW-0964">Secreted</keyword>
<keyword id="KW-0722">Serine protease inhibitor</keyword>
<keyword id="KW-0732">Signal</keyword>
<proteinExistence type="evidence at protein level"/>
<reference key="1">
    <citation type="journal article" date="2011" name="J. Proteome Res.">
        <title>Identification of novel proteins from the venom of a cryptic snake Drysdalia coronoides by a combined transcriptomics and proteomics approach.</title>
        <authorList>
            <person name="Chatrath S.T."/>
            <person name="Chapeaurouge A."/>
            <person name="Lin Q."/>
            <person name="Lim T.K."/>
            <person name="Dunstan N."/>
            <person name="Mirtschin P."/>
            <person name="Kumar P.P."/>
            <person name="Kini R.M."/>
        </authorList>
    </citation>
    <scope>NUCLEOTIDE SEQUENCE [MRNA]</scope>
    <scope>IDENTIFICATION BY MASS SPECTROMETRY</scope>
    <source>
        <tissue>Venom</tissue>
        <tissue>Venom gland</tissue>
    </source>
</reference>
<comment type="function">
    <text evidence="1">Serine protease inhibitor.</text>
</comment>
<comment type="subcellular location">
    <subcellularLocation>
        <location>Secreted</location>
    </subcellularLocation>
</comment>
<comment type="tissue specificity">
    <text>Expressed by the venom gland.</text>
</comment>
<comment type="similarity">
    <text evidence="4">Belongs to the venom Kunitz-type family.</text>
</comment>
<sequence length="83" mass="9252">MSSGGLLLLLGLLTLWAELTPVSSKDRPDFCHLPHETGPCKAKIQAFYYNPIYDTCLKFIYGGCEGNANNFKTMDECKRTCAE</sequence>
<name>VKT87_DRYCN</name>
<organism>
    <name type="scientific">Drysdalia coronoides</name>
    <name type="common">White-lipped snake</name>
    <name type="synonym">Hoplocephalus coronoides</name>
    <dbReference type="NCBI Taxonomy" id="66186"/>
    <lineage>
        <taxon>Eukaryota</taxon>
        <taxon>Metazoa</taxon>
        <taxon>Chordata</taxon>
        <taxon>Craniata</taxon>
        <taxon>Vertebrata</taxon>
        <taxon>Euteleostomi</taxon>
        <taxon>Lepidosauria</taxon>
        <taxon>Squamata</taxon>
        <taxon>Bifurcata</taxon>
        <taxon>Unidentata</taxon>
        <taxon>Episquamata</taxon>
        <taxon>Toxicofera</taxon>
        <taxon>Serpentes</taxon>
        <taxon>Colubroidea</taxon>
        <taxon>Elapidae</taxon>
        <taxon>Notechinae</taxon>
        <taxon>Drysdalia</taxon>
    </lineage>
</organism>